<evidence type="ECO:0000255" key="1">
    <source>
        <dbReference type="HAMAP-Rule" id="MF_00537"/>
    </source>
</evidence>
<evidence type="ECO:0000305" key="2"/>
<dbReference type="EMBL" id="CP000446">
    <property type="protein sequence ID" value="ABI37293.1"/>
    <property type="molecule type" value="Genomic_DNA"/>
</dbReference>
<dbReference type="RefSeq" id="WP_011621030.1">
    <property type="nucleotide sequence ID" value="NC_008321.1"/>
</dbReference>
<dbReference type="SMR" id="Q0HNS4"/>
<dbReference type="GeneID" id="94726199"/>
<dbReference type="KEGG" id="she:Shewmr4_0212"/>
<dbReference type="HOGENOM" id="CLU_139869_0_1_6"/>
<dbReference type="GO" id="GO:0005737">
    <property type="term" value="C:cytoplasm"/>
    <property type="evidence" value="ECO:0007669"/>
    <property type="project" value="UniProtKB-ARBA"/>
</dbReference>
<dbReference type="GO" id="GO:0015935">
    <property type="term" value="C:small ribosomal subunit"/>
    <property type="evidence" value="ECO:0007669"/>
    <property type="project" value="TreeGrafter"/>
</dbReference>
<dbReference type="GO" id="GO:0019843">
    <property type="term" value="F:rRNA binding"/>
    <property type="evidence" value="ECO:0007669"/>
    <property type="project" value="UniProtKB-UniRule"/>
</dbReference>
<dbReference type="GO" id="GO:0003735">
    <property type="term" value="F:structural constituent of ribosome"/>
    <property type="evidence" value="ECO:0007669"/>
    <property type="project" value="InterPro"/>
</dbReference>
<dbReference type="GO" id="GO:0006412">
    <property type="term" value="P:translation"/>
    <property type="evidence" value="ECO:0007669"/>
    <property type="project" value="UniProtKB-UniRule"/>
</dbReference>
<dbReference type="FunFam" id="1.10.287.1480:FF:000001">
    <property type="entry name" value="30S ribosomal protein S14"/>
    <property type="match status" value="1"/>
</dbReference>
<dbReference type="Gene3D" id="1.10.287.1480">
    <property type="match status" value="1"/>
</dbReference>
<dbReference type="HAMAP" id="MF_00537">
    <property type="entry name" value="Ribosomal_uS14_1"/>
    <property type="match status" value="1"/>
</dbReference>
<dbReference type="InterPro" id="IPR001209">
    <property type="entry name" value="Ribosomal_uS14"/>
</dbReference>
<dbReference type="InterPro" id="IPR023036">
    <property type="entry name" value="Ribosomal_uS14_bac/plastid"/>
</dbReference>
<dbReference type="InterPro" id="IPR018271">
    <property type="entry name" value="Ribosomal_uS14_CS"/>
</dbReference>
<dbReference type="NCBIfam" id="NF006477">
    <property type="entry name" value="PRK08881.1"/>
    <property type="match status" value="1"/>
</dbReference>
<dbReference type="PANTHER" id="PTHR19836">
    <property type="entry name" value="30S RIBOSOMAL PROTEIN S14"/>
    <property type="match status" value="1"/>
</dbReference>
<dbReference type="PANTHER" id="PTHR19836:SF19">
    <property type="entry name" value="SMALL RIBOSOMAL SUBUNIT PROTEIN US14M"/>
    <property type="match status" value="1"/>
</dbReference>
<dbReference type="Pfam" id="PF00253">
    <property type="entry name" value="Ribosomal_S14"/>
    <property type="match status" value="1"/>
</dbReference>
<dbReference type="SUPFAM" id="SSF57716">
    <property type="entry name" value="Glucocorticoid receptor-like (DNA-binding domain)"/>
    <property type="match status" value="1"/>
</dbReference>
<dbReference type="PROSITE" id="PS00527">
    <property type="entry name" value="RIBOSOMAL_S14"/>
    <property type="match status" value="1"/>
</dbReference>
<keyword id="KW-0687">Ribonucleoprotein</keyword>
<keyword id="KW-0689">Ribosomal protein</keyword>
<keyword id="KW-0694">RNA-binding</keyword>
<keyword id="KW-0699">rRNA-binding</keyword>
<reference key="1">
    <citation type="submission" date="2006-08" db="EMBL/GenBank/DDBJ databases">
        <title>Complete sequence of Shewanella sp. MR-4.</title>
        <authorList>
            <consortium name="US DOE Joint Genome Institute"/>
            <person name="Copeland A."/>
            <person name="Lucas S."/>
            <person name="Lapidus A."/>
            <person name="Barry K."/>
            <person name="Detter J.C."/>
            <person name="Glavina del Rio T."/>
            <person name="Hammon N."/>
            <person name="Israni S."/>
            <person name="Dalin E."/>
            <person name="Tice H."/>
            <person name="Pitluck S."/>
            <person name="Kiss H."/>
            <person name="Brettin T."/>
            <person name="Bruce D."/>
            <person name="Han C."/>
            <person name="Tapia R."/>
            <person name="Gilna P."/>
            <person name="Schmutz J."/>
            <person name="Larimer F."/>
            <person name="Land M."/>
            <person name="Hauser L."/>
            <person name="Kyrpides N."/>
            <person name="Mikhailova N."/>
            <person name="Nealson K."/>
            <person name="Konstantinidis K."/>
            <person name="Klappenbach J."/>
            <person name="Tiedje J."/>
            <person name="Richardson P."/>
        </authorList>
    </citation>
    <scope>NUCLEOTIDE SEQUENCE [LARGE SCALE GENOMIC DNA]</scope>
    <source>
        <strain>MR-4</strain>
    </source>
</reference>
<feature type="chain" id="PRO_1000128583" description="Small ribosomal subunit protein uS14">
    <location>
        <begin position="1"/>
        <end position="101"/>
    </location>
</feature>
<name>RS14_SHESM</name>
<proteinExistence type="inferred from homology"/>
<organism>
    <name type="scientific">Shewanella sp. (strain MR-4)</name>
    <dbReference type="NCBI Taxonomy" id="60480"/>
    <lineage>
        <taxon>Bacteria</taxon>
        <taxon>Pseudomonadati</taxon>
        <taxon>Pseudomonadota</taxon>
        <taxon>Gammaproteobacteria</taxon>
        <taxon>Alteromonadales</taxon>
        <taxon>Shewanellaceae</taxon>
        <taxon>Shewanella</taxon>
    </lineage>
</organism>
<accession>Q0HNS4</accession>
<gene>
    <name evidence="1" type="primary">rpsN</name>
    <name type="ordered locus">Shewmr4_0212</name>
</gene>
<protein>
    <recommendedName>
        <fullName evidence="1">Small ribosomal subunit protein uS14</fullName>
    </recommendedName>
    <alternativeName>
        <fullName evidence="2">30S ribosomal protein S14</fullName>
    </alternativeName>
</protein>
<comment type="function">
    <text evidence="1">Binds 16S rRNA, required for the assembly of 30S particles and may also be responsible for determining the conformation of the 16S rRNA at the A site.</text>
</comment>
<comment type="subunit">
    <text evidence="1">Part of the 30S ribosomal subunit. Contacts proteins S3 and S10.</text>
</comment>
<comment type="similarity">
    <text evidence="1">Belongs to the universal ribosomal protein uS14 family.</text>
</comment>
<sequence length="101" mass="11361">MAKTSMKAREAKRAQLVAKFAEKRAALKAIIANPASSDEDRWDAVLKLQALPRDSSASRQRNRCNQTGRPHGFLRKFGLSRIKLREATMRGEVPGLRKASW</sequence>